<proteinExistence type="inferred from homology"/>
<evidence type="ECO:0000255" key="1">
    <source>
        <dbReference type="HAMAP-Rule" id="MF_00002"/>
    </source>
</evidence>
<dbReference type="EMBL" id="CP000728">
    <property type="protein sequence ID" value="ABS42350.1"/>
    <property type="molecule type" value="Genomic_DNA"/>
</dbReference>
<dbReference type="RefSeq" id="WP_003357668.1">
    <property type="nucleotide sequence ID" value="NC_009699.1"/>
</dbReference>
<dbReference type="SMR" id="A7GII1"/>
<dbReference type="KEGG" id="cbf:CLI_3379"/>
<dbReference type="HOGENOM" id="CLU_128576_0_0_9"/>
<dbReference type="Proteomes" id="UP000002410">
    <property type="component" value="Chromosome"/>
</dbReference>
<dbReference type="GO" id="GO:0009347">
    <property type="term" value="C:aspartate carbamoyltransferase complex"/>
    <property type="evidence" value="ECO:0007669"/>
    <property type="project" value="InterPro"/>
</dbReference>
<dbReference type="GO" id="GO:0046872">
    <property type="term" value="F:metal ion binding"/>
    <property type="evidence" value="ECO:0007669"/>
    <property type="project" value="UniProtKB-KW"/>
</dbReference>
<dbReference type="GO" id="GO:0006207">
    <property type="term" value="P:'de novo' pyrimidine nucleobase biosynthetic process"/>
    <property type="evidence" value="ECO:0007669"/>
    <property type="project" value="InterPro"/>
</dbReference>
<dbReference type="GO" id="GO:0006221">
    <property type="term" value="P:pyrimidine nucleotide biosynthetic process"/>
    <property type="evidence" value="ECO:0007669"/>
    <property type="project" value="UniProtKB-UniRule"/>
</dbReference>
<dbReference type="Gene3D" id="2.30.30.20">
    <property type="entry name" value="Aspartate carbamoyltransferase regulatory subunit, C-terminal domain"/>
    <property type="match status" value="1"/>
</dbReference>
<dbReference type="Gene3D" id="3.30.70.140">
    <property type="entry name" value="Aspartate carbamoyltransferase regulatory subunit, N-terminal domain"/>
    <property type="match status" value="1"/>
</dbReference>
<dbReference type="HAMAP" id="MF_00002">
    <property type="entry name" value="Asp_carb_tr_reg"/>
    <property type="match status" value="1"/>
</dbReference>
<dbReference type="InterPro" id="IPR020545">
    <property type="entry name" value="Asp_carbamoyltransf_reg_N"/>
</dbReference>
<dbReference type="InterPro" id="IPR002801">
    <property type="entry name" value="Asp_carbamoylTrfase_reg"/>
</dbReference>
<dbReference type="InterPro" id="IPR020542">
    <property type="entry name" value="Asp_carbamoyltrfase_reg_C"/>
</dbReference>
<dbReference type="InterPro" id="IPR036792">
    <property type="entry name" value="Asp_carbatrfase_reg_C_sf"/>
</dbReference>
<dbReference type="InterPro" id="IPR036793">
    <property type="entry name" value="Asp_carbatrfase_reg_N_sf"/>
</dbReference>
<dbReference type="NCBIfam" id="NF002063">
    <property type="entry name" value="PRK00893.1-3"/>
    <property type="match status" value="1"/>
</dbReference>
<dbReference type="PANTHER" id="PTHR35805">
    <property type="entry name" value="ASPARTATE CARBAMOYLTRANSFERASE REGULATORY CHAIN"/>
    <property type="match status" value="1"/>
</dbReference>
<dbReference type="PANTHER" id="PTHR35805:SF1">
    <property type="entry name" value="ASPARTATE CARBAMOYLTRANSFERASE REGULATORY CHAIN"/>
    <property type="match status" value="1"/>
</dbReference>
<dbReference type="Pfam" id="PF01948">
    <property type="entry name" value="PyrI"/>
    <property type="match status" value="1"/>
</dbReference>
<dbReference type="Pfam" id="PF02748">
    <property type="entry name" value="PyrI_C"/>
    <property type="match status" value="1"/>
</dbReference>
<dbReference type="SUPFAM" id="SSF57825">
    <property type="entry name" value="Aspartate carbamoyltransferase, Regulatory-chain, C-terminal domain"/>
    <property type="match status" value="1"/>
</dbReference>
<dbReference type="SUPFAM" id="SSF54893">
    <property type="entry name" value="Aspartate carbamoyltransferase, Regulatory-chain, N-terminal domain"/>
    <property type="match status" value="1"/>
</dbReference>
<reference key="1">
    <citation type="submission" date="2007-06" db="EMBL/GenBank/DDBJ databases">
        <authorList>
            <person name="Brinkac L.M."/>
            <person name="Daugherty S."/>
            <person name="Dodson R.J."/>
            <person name="Madupu R."/>
            <person name="Brown J.L."/>
            <person name="Bruce D."/>
            <person name="Detter C."/>
            <person name="Munk C."/>
            <person name="Smith L.A."/>
            <person name="Smith T.J."/>
            <person name="White O."/>
            <person name="Brettin T.S."/>
        </authorList>
    </citation>
    <scope>NUCLEOTIDE SEQUENCE [LARGE SCALE GENOMIC DNA]</scope>
    <source>
        <strain>Langeland / NCTC 10281 / Type F</strain>
    </source>
</reference>
<gene>
    <name evidence="1" type="primary">pyrI</name>
    <name type="ordered locus">CLI_3379</name>
</gene>
<sequence>MLTINSIKNGIVIDHIQAGHGIKIFKYLGLEEADYRVALIMNAESSKLGKKDIIKIENIMEIDYKVLGFIDPTITIDVIENETIKEKIKLELPKTIENVIKCKNPRCITSIENYIPNEFYLVDEENGEYRCKYCDEIYSGGDINKL</sequence>
<comment type="function">
    <text evidence="1">Involved in allosteric regulation of aspartate carbamoyltransferase.</text>
</comment>
<comment type="cofactor">
    <cofactor evidence="1">
        <name>Zn(2+)</name>
        <dbReference type="ChEBI" id="CHEBI:29105"/>
    </cofactor>
    <text evidence="1">Binds 1 zinc ion per subunit.</text>
</comment>
<comment type="subunit">
    <text evidence="1">Contains catalytic and regulatory chains.</text>
</comment>
<comment type="similarity">
    <text evidence="1">Belongs to the PyrI family.</text>
</comment>
<keyword id="KW-0479">Metal-binding</keyword>
<keyword id="KW-0665">Pyrimidine biosynthesis</keyword>
<keyword id="KW-0862">Zinc</keyword>
<name>PYRI_CLOBL</name>
<protein>
    <recommendedName>
        <fullName evidence="1">Aspartate carbamoyltransferase regulatory chain</fullName>
    </recommendedName>
</protein>
<organism>
    <name type="scientific">Clostridium botulinum (strain Langeland / NCTC 10281 / Type F)</name>
    <dbReference type="NCBI Taxonomy" id="441772"/>
    <lineage>
        <taxon>Bacteria</taxon>
        <taxon>Bacillati</taxon>
        <taxon>Bacillota</taxon>
        <taxon>Clostridia</taxon>
        <taxon>Eubacteriales</taxon>
        <taxon>Clostridiaceae</taxon>
        <taxon>Clostridium</taxon>
    </lineage>
</organism>
<accession>A7GII1</accession>
<feature type="chain" id="PRO_1000000031" description="Aspartate carbamoyltransferase regulatory chain">
    <location>
        <begin position="1"/>
        <end position="146"/>
    </location>
</feature>
<feature type="binding site" evidence="1">
    <location>
        <position position="102"/>
    </location>
    <ligand>
        <name>Zn(2+)</name>
        <dbReference type="ChEBI" id="CHEBI:29105"/>
    </ligand>
</feature>
<feature type="binding site" evidence="1">
    <location>
        <position position="107"/>
    </location>
    <ligand>
        <name>Zn(2+)</name>
        <dbReference type="ChEBI" id="CHEBI:29105"/>
    </ligand>
</feature>
<feature type="binding site" evidence="1">
    <location>
        <position position="131"/>
    </location>
    <ligand>
        <name>Zn(2+)</name>
        <dbReference type="ChEBI" id="CHEBI:29105"/>
    </ligand>
</feature>
<feature type="binding site" evidence="1">
    <location>
        <position position="134"/>
    </location>
    <ligand>
        <name>Zn(2+)</name>
        <dbReference type="ChEBI" id="CHEBI:29105"/>
    </ligand>
</feature>